<gene>
    <name evidence="1" type="primary">murB</name>
    <name type="ordered locus">Lxx02830</name>
</gene>
<accession>Q6AH30</accession>
<keyword id="KW-0131">Cell cycle</keyword>
<keyword id="KW-0132">Cell division</keyword>
<keyword id="KW-0133">Cell shape</keyword>
<keyword id="KW-0961">Cell wall biogenesis/degradation</keyword>
<keyword id="KW-0963">Cytoplasm</keyword>
<keyword id="KW-0274">FAD</keyword>
<keyword id="KW-0285">Flavoprotein</keyword>
<keyword id="KW-0521">NADP</keyword>
<keyword id="KW-0560">Oxidoreductase</keyword>
<keyword id="KW-0573">Peptidoglycan synthesis</keyword>
<keyword id="KW-1185">Reference proteome</keyword>
<feature type="chain" id="PRO_0000179222" description="UDP-N-acetylenolpyruvoylglucosamine reductase">
    <location>
        <begin position="1"/>
        <end position="378"/>
    </location>
</feature>
<feature type="domain" description="FAD-binding PCMH-type" evidence="1">
    <location>
        <begin position="15"/>
        <end position="185"/>
    </location>
</feature>
<feature type="active site" evidence="1">
    <location>
        <position position="163"/>
    </location>
</feature>
<feature type="active site" description="Proton donor" evidence="1">
    <location>
        <position position="248"/>
    </location>
</feature>
<feature type="active site" evidence="1">
    <location>
        <position position="370"/>
    </location>
</feature>
<protein>
    <recommendedName>
        <fullName evidence="1">UDP-N-acetylenolpyruvoylglucosamine reductase</fullName>
        <ecNumber evidence="1">1.3.1.98</ecNumber>
    </recommendedName>
    <alternativeName>
        <fullName evidence="1">UDP-N-acetylmuramate dehydrogenase</fullName>
    </alternativeName>
</protein>
<name>MURB_LEIXX</name>
<organism>
    <name type="scientific">Leifsonia xyli subsp. xyli (strain CTCB07)</name>
    <dbReference type="NCBI Taxonomy" id="281090"/>
    <lineage>
        <taxon>Bacteria</taxon>
        <taxon>Bacillati</taxon>
        <taxon>Actinomycetota</taxon>
        <taxon>Actinomycetes</taxon>
        <taxon>Micrococcales</taxon>
        <taxon>Microbacteriaceae</taxon>
        <taxon>Leifsonia</taxon>
    </lineage>
</organism>
<sequence length="378" mass="39010">MTDPPALSALTTMRVGGTPERLLEPADRDALVATAREVWSTGDEWLLLGGGSNTIAADDGFEGTVLRIVTRGVERLAAEKGRIRLRVQAGEPWDALVALTVRNGWAGIEALSGIPGSTGAAPVQNIGAYGQEIESALIGVEFLDYLTGEVYTLARAELGLGYRTSALKRGMAGVVLSVDLELADHSVPGGVGASLSAPIAYAQLADALAVPLGSRVSVDELRRAVLALRASKGMVLDPADPDSVSAGSFFTNPIVSENVARALPSDAPRWSLGPPEPDTILSLGPEGVHPLDVPPFAAGPYEAKLSAAWLIENAGIRSGFALPGSGAAISSKHTLAIVNRGAATAADVAQLASFVRGRVQADFGVVLHPEPVLVGLTL</sequence>
<dbReference type="EC" id="1.3.1.98" evidence="1"/>
<dbReference type="EMBL" id="AE016822">
    <property type="protein sequence ID" value="AAT88315.1"/>
    <property type="molecule type" value="Genomic_DNA"/>
</dbReference>
<dbReference type="RefSeq" id="WP_011185318.1">
    <property type="nucleotide sequence ID" value="NC_006087.1"/>
</dbReference>
<dbReference type="SMR" id="Q6AH30"/>
<dbReference type="STRING" id="281090.Lxx02830"/>
<dbReference type="KEGG" id="lxx:Lxx02830"/>
<dbReference type="eggNOG" id="COG0812">
    <property type="taxonomic scope" value="Bacteria"/>
</dbReference>
<dbReference type="HOGENOM" id="CLU_035304_0_1_11"/>
<dbReference type="UniPathway" id="UPA00219"/>
<dbReference type="Proteomes" id="UP000001306">
    <property type="component" value="Chromosome"/>
</dbReference>
<dbReference type="GO" id="GO:0005829">
    <property type="term" value="C:cytosol"/>
    <property type="evidence" value="ECO:0007669"/>
    <property type="project" value="TreeGrafter"/>
</dbReference>
<dbReference type="GO" id="GO:0071949">
    <property type="term" value="F:FAD binding"/>
    <property type="evidence" value="ECO:0007669"/>
    <property type="project" value="InterPro"/>
</dbReference>
<dbReference type="GO" id="GO:0008762">
    <property type="term" value="F:UDP-N-acetylmuramate dehydrogenase activity"/>
    <property type="evidence" value="ECO:0007669"/>
    <property type="project" value="UniProtKB-UniRule"/>
</dbReference>
<dbReference type="GO" id="GO:0051301">
    <property type="term" value="P:cell division"/>
    <property type="evidence" value="ECO:0007669"/>
    <property type="project" value="UniProtKB-KW"/>
</dbReference>
<dbReference type="GO" id="GO:0071555">
    <property type="term" value="P:cell wall organization"/>
    <property type="evidence" value="ECO:0007669"/>
    <property type="project" value="UniProtKB-KW"/>
</dbReference>
<dbReference type="GO" id="GO:0009252">
    <property type="term" value="P:peptidoglycan biosynthetic process"/>
    <property type="evidence" value="ECO:0007669"/>
    <property type="project" value="UniProtKB-UniRule"/>
</dbReference>
<dbReference type="GO" id="GO:0008360">
    <property type="term" value="P:regulation of cell shape"/>
    <property type="evidence" value="ECO:0007669"/>
    <property type="project" value="UniProtKB-KW"/>
</dbReference>
<dbReference type="Gene3D" id="3.30.465.10">
    <property type="match status" value="1"/>
</dbReference>
<dbReference type="Gene3D" id="3.90.78.10">
    <property type="entry name" value="UDP-N-acetylenolpyruvoylglucosamine reductase, C-terminal domain"/>
    <property type="match status" value="1"/>
</dbReference>
<dbReference type="Gene3D" id="3.30.43.10">
    <property type="entry name" value="Uridine Diphospho-n-acetylenolpyruvylglucosamine Reductase, domain 2"/>
    <property type="match status" value="1"/>
</dbReference>
<dbReference type="HAMAP" id="MF_00037">
    <property type="entry name" value="MurB"/>
    <property type="match status" value="1"/>
</dbReference>
<dbReference type="InterPro" id="IPR016166">
    <property type="entry name" value="FAD-bd_PCMH"/>
</dbReference>
<dbReference type="InterPro" id="IPR036318">
    <property type="entry name" value="FAD-bd_PCMH-like_sf"/>
</dbReference>
<dbReference type="InterPro" id="IPR016167">
    <property type="entry name" value="FAD-bd_PCMH_sub1"/>
</dbReference>
<dbReference type="InterPro" id="IPR016169">
    <property type="entry name" value="FAD-bd_PCMH_sub2"/>
</dbReference>
<dbReference type="InterPro" id="IPR003170">
    <property type="entry name" value="MurB"/>
</dbReference>
<dbReference type="InterPro" id="IPR011601">
    <property type="entry name" value="MurB_C"/>
</dbReference>
<dbReference type="InterPro" id="IPR036635">
    <property type="entry name" value="MurB_C_sf"/>
</dbReference>
<dbReference type="InterPro" id="IPR006094">
    <property type="entry name" value="Oxid_FAD_bind_N"/>
</dbReference>
<dbReference type="NCBIfam" id="NF010478">
    <property type="entry name" value="PRK13903.1"/>
    <property type="match status" value="1"/>
</dbReference>
<dbReference type="PANTHER" id="PTHR21071">
    <property type="entry name" value="UDP-N-ACETYLENOLPYRUVOYLGLUCOSAMINE REDUCTASE"/>
    <property type="match status" value="1"/>
</dbReference>
<dbReference type="PANTHER" id="PTHR21071:SF4">
    <property type="entry name" value="UDP-N-ACETYLENOLPYRUVOYLGLUCOSAMINE REDUCTASE"/>
    <property type="match status" value="1"/>
</dbReference>
<dbReference type="Pfam" id="PF01565">
    <property type="entry name" value="FAD_binding_4"/>
    <property type="match status" value="1"/>
</dbReference>
<dbReference type="Pfam" id="PF02873">
    <property type="entry name" value="MurB_C"/>
    <property type="match status" value="1"/>
</dbReference>
<dbReference type="SUPFAM" id="SSF56176">
    <property type="entry name" value="FAD-binding/transporter-associated domain-like"/>
    <property type="match status" value="1"/>
</dbReference>
<dbReference type="SUPFAM" id="SSF56194">
    <property type="entry name" value="Uridine diphospho-N-Acetylenolpyruvylglucosamine reductase, MurB, C-terminal domain"/>
    <property type="match status" value="1"/>
</dbReference>
<dbReference type="PROSITE" id="PS51387">
    <property type="entry name" value="FAD_PCMH"/>
    <property type="match status" value="1"/>
</dbReference>
<evidence type="ECO:0000255" key="1">
    <source>
        <dbReference type="HAMAP-Rule" id="MF_00037"/>
    </source>
</evidence>
<reference key="1">
    <citation type="journal article" date="2004" name="Mol. Plant Microbe Interact.">
        <title>The genome sequence of the Gram-positive sugarcane pathogen Leifsonia xyli subsp. xyli.</title>
        <authorList>
            <person name="Monteiro-Vitorello C.B."/>
            <person name="Camargo L.E.A."/>
            <person name="Van Sluys M.A."/>
            <person name="Kitajima J.P."/>
            <person name="Truffi D."/>
            <person name="do Amaral A.M."/>
            <person name="Harakava R."/>
            <person name="de Oliveira J.C.F."/>
            <person name="Wood D."/>
            <person name="de Oliveira M.C."/>
            <person name="Miyaki C.Y."/>
            <person name="Takita M.A."/>
            <person name="da Silva A.C.R."/>
            <person name="Furlan L.R."/>
            <person name="Carraro D.M."/>
            <person name="Camarotte G."/>
            <person name="Almeida N.F. Jr."/>
            <person name="Carrer H."/>
            <person name="Coutinho L.L."/>
            <person name="El-Dorry H.A."/>
            <person name="Ferro M.I.T."/>
            <person name="Gagliardi P.R."/>
            <person name="Giglioti E."/>
            <person name="Goldman M.H.S."/>
            <person name="Goldman G.H."/>
            <person name="Kimura E.T."/>
            <person name="Ferro E.S."/>
            <person name="Kuramae E.E."/>
            <person name="Lemos E.G.M."/>
            <person name="Lemos M.V.F."/>
            <person name="Mauro S.M.Z."/>
            <person name="Machado M.A."/>
            <person name="Marino C.L."/>
            <person name="Menck C.F."/>
            <person name="Nunes L.R."/>
            <person name="Oliveira R.C."/>
            <person name="Pereira G.G."/>
            <person name="Siqueira W."/>
            <person name="de Souza A.A."/>
            <person name="Tsai S.M."/>
            <person name="Zanca A.S."/>
            <person name="Simpson A.J.G."/>
            <person name="Brumbley S.M."/>
            <person name="Setubal J.C."/>
        </authorList>
    </citation>
    <scope>NUCLEOTIDE SEQUENCE [LARGE SCALE GENOMIC DNA]</scope>
    <source>
        <strain>CTCB07</strain>
    </source>
</reference>
<proteinExistence type="inferred from homology"/>
<comment type="function">
    <text evidence="1">Cell wall formation.</text>
</comment>
<comment type="catalytic activity">
    <reaction evidence="1">
        <text>UDP-N-acetyl-alpha-D-muramate + NADP(+) = UDP-N-acetyl-3-O-(1-carboxyvinyl)-alpha-D-glucosamine + NADPH + H(+)</text>
        <dbReference type="Rhea" id="RHEA:12248"/>
        <dbReference type="ChEBI" id="CHEBI:15378"/>
        <dbReference type="ChEBI" id="CHEBI:57783"/>
        <dbReference type="ChEBI" id="CHEBI:58349"/>
        <dbReference type="ChEBI" id="CHEBI:68483"/>
        <dbReference type="ChEBI" id="CHEBI:70757"/>
        <dbReference type="EC" id="1.3.1.98"/>
    </reaction>
</comment>
<comment type="cofactor">
    <cofactor evidence="1">
        <name>FAD</name>
        <dbReference type="ChEBI" id="CHEBI:57692"/>
    </cofactor>
</comment>
<comment type="pathway">
    <text evidence="1">Cell wall biogenesis; peptidoglycan biosynthesis.</text>
</comment>
<comment type="subcellular location">
    <subcellularLocation>
        <location evidence="1">Cytoplasm</location>
    </subcellularLocation>
</comment>
<comment type="similarity">
    <text evidence="1">Belongs to the MurB family.</text>
</comment>